<comment type="function">
    <text evidence="1">Has an important function as a repair enzyme for proteins that have been inactivated by oxidation. Catalyzes the reversible oxidation-reduction of methionine sulfoxide in proteins to methionine.</text>
</comment>
<comment type="catalytic activity">
    <reaction evidence="1">
        <text>L-methionyl-[protein] + [thioredoxin]-disulfide + H2O = L-methionyl-(S)-S-oxide-[protein] + [thioredoxin]-dithiol</text>
        <dbReference type="Rhea" id="RHEA:14217"/>
        <dbReference type="Rhea" id="RHEA-COMP:10698"/>
        <dbReference type="Rhea" id="RHEA-COMP:10700"/>
        <dbReference type="Rhea" id="RHEA-COMP:12313"/>
        <dbReference type="Rhea" id="RHEA-COMP:12315"/>
        <dbReference type="ChEBI" id="CHEBI:15377"/>
        <dbReference type="ChEBI" id="CHEBI:16044"/>
        <dbReference type="ChEBI" id="CHEBI:29950"/>
        <dbReference type="ChEBI" id="CHEBI:44120"/>
        <dbReference type="ChEBI" id="CHEBI:50058"/>
        <dbReference type="EC" id="1.8.4.11"/>
    </reaction>
</comment>
<comment type="catalytic activity">
    <reaction evidence="1">
        <text>[thioredoxin]-disulfide + L-methionine + H2O = L-methionine (S)-S-oxide + [thioredoxin]-dithiol</text>
        <dbReference type="Rhea" id="RHEA:19993"/>
        <dbReference type="Rhea" id="RHEA-COMP:10698"/>
        <dbReference type="Rhea" id="RHEA-COMP:10700"/>
        <dbReference type="ChEBI" id="CHEBI:15377"/>
        <dbReference type="ChEBI" id="CHEBI:29950"/>
        <dbReference type="ChEBI" id="CHEBI:50058"/>
        <dbReference type="ChEBI" id="CHEBI:57844"/>
        <dbReference type="ChEBI" id="CHEBI:58772"/>
        <dbReference type="EC" id="1.8.4.11"/>
    </reaction>
</comment>
<comment type="similarity">
    <text evidence="1">Belongs to the MsrA Met sulfoxide reductase family.</text>
</comment>
<sequence>MERAIFAGGCFWCMVQPFEEQAGILSVRSGYTGGHLPNPSYEQVCAKTTGHTEAVEIIFDPKQIAYKDLVELYWAQTDPTDAFGQFEDRGDNYRPVIYYTTERQKEIAEQSKASLQASGRFDQPIVTTIEPAEPFYLAEDYHQGFYKKNPKRYAQSSAIRHQFLEENWS</sequence>
<reference key="1">
    <citation type="journal article" date="2006" name="Proc. Natl. Acad. Sci. U.S.A.">
        <title>Molecular genetic anatomy of inter- and intraserotype variation in the human bacterial pathogen group A Streptococcus.</title>
        <authorList>
            <person name="Beres S.B."/>
            <person name="Richter E.W."/>
            <person name="Nagiec M.J."/>
            <person name="Sumby P."/>
            <person name="Porcella S.F."/>
            <person name="DeLeo F.R."/>
            <person name="Musser J.M."/>
        </authorList>
    </citation>
    <scope>NUCLEOTIDE SEQUENCE [LARGE SCALE GENOMIC DNA]</scope>
    <source>
        <strain>MGAS10270</strain>
    </source>
</reference>
<dbReference type="EC" id="1.8.4.11" evidence="1"/>
<dbReference type="EMBL" id="CP000260">
    <property type="protein sequence ID" value="ABF33448.1"/>
    <property type="molecule type" value="Genomic_DNA"/>
</dbReference>
<dbReference type="SMR" id="Q1JI75"/>
<dbReference type="KEGG" id="sph:MGAS10270_Spy0383"/>
<dbReference type="HOGENOM" id="CLU_031040_10_1_9"/>
<dbReference type="Proteomes" id="UP000002436">
    <property type="component" value="Chromosome"/>
</dbReference>
<dbReference type="GO" id="GO:0033744">
    <property type="term" value="F:L-methionine:thioredoxin-disulfide S-oxidoreductase activity"/>
    <property type="evidence" value="ECO:0007669"/>
    <property type="project" value="RHEA"/>
</dbReference>
<dbReference type="GO" id="GO:0008113">
    <property type="term" value="F:peptide-methionine (S)-S-oxide reductase activity"/>
    <property type="evidence" value="ECO:0007669"/>
    <property type="project" value="UniProtKB-UniRule"/>
</dbReference>
<dbReference type="GO" id="GO:0036211">
    <property type="term" value="P:protein modification process"/>
    <property type="evidence" value="ECO:0007669"/>
    <property type="project" value="UniProtKB-UniRule"/>
</dbReference>
<dbReference type="Gene3D" id="3.30.1060.10">
    <property type="entry name" value="Peptide methionine sulphoxide reductase MsrA"/>
    <property type="match status" value="1"/>
</dbReference>
<dbReference type="HAMAP" id="MF_01401">
    <property type="entry name" value="MsrA"/>
    <property type="match status" value="1"/>
</dbReference>
<dbReference type="InterPro" id="IPR002569">
    <property type="entry name" value="Met_Sox_Rdtase_MsrA_dom"/>
</dbReference>
<dbReference type="InterPro" id="IPR036509">
    <property type="entry name" value="Met_Sox_Rdtase_MsrA_sf"/>
</dbReference>
<dbReference type="NCBIfam" id="TIGR00401">
    <property type="entry name" value="msrA"/>
    <property type="match status" value="1"/>
</dbReference>
<dbReference type="PANTHER" id="PTHR43774">
    <property type="entry name" value="PEPTIDE METHIONINE SULFOXIDE REDUCTASE"/>
    <property type="match status" value="1"/>
</dbReference>
<dbReference type="PANTHER" id="PTHR43774:SF1">
    <property type="entry name" value="PEPTIDE METHIONINE SULFOXIDE REDUCTASE MSRA 2"/>
    <property type="match status" value="1"/>
</dbReference>
<dbReference type="Pfam" id="PF01625">
    <property type="entry name" value="PMSR"/>
    <property type="match status" value="1"/>
</dbReference>
<dbReference type="SUPFAM" id="SSF55068">
    <property type="entry name" value="Peptide methionine sulfoxide reductase"/>
    <property type="match status" value="1"/>
</dbReference>
<name>MSRA_STRPD</name>
<evidence type="ECO:0000255" key="1">
    <source>
        <dbReference type="HAMAP-Rule" id="MF_01401"/>
    </source>
</evidence>
<protein>
    <recommendedName>
        <fullName evidence="1">Peptide methionine sulfoxide reductase MsrA</fullName>
        <shortName evidence="1">Protein-methionine-S-oxide reductase</shortName>
        <ecNumber evidence="1">1.8.4.11</ecNumber>
    </recommendedName>
    <alternativeName>
        <fullName evidence="1">Peptide-methionine (S)-S-oxide reductase</fullName>
        <shortName evidence="1">Peptide Met(O) reductase</shortName>
    </alternativeName>
</protein>
<proteinExistence type="inferred from homology"/>
<gene>
    <name evidence="1" type="primary">msrA</name>
    <name type="ordered locus">MGAS10270_Spy0383</name>
</gene>
<keyword id="KW-0560">Oxidoreductase</keyword>
<accession>Q1JI75</accession>
<organism>
    <name type="scientific">Streptococcus pyogenes serotype M2 (strain MGAS10270)</name>
    <dbReference type="NCBI Taxonomy" id="370552"/>
    <lineage>
        <taxon>Bacteria</taxon>
        <taxon>Bacillati</taxon>
        <taxon>Bacillota</taxon>
        <taxon>Bacilli</taxon>
        <taxon>Lactobacillales</taxon>
        <taxon>Streptococcaceae</taxon>
        <taxon>Streptococcus</taxon>
    </lineage>
</organism>
<feature type="chain" id="PRO_1000068367" description="Peptide methionine sulfoxide reductase MsrA">
    <location>
        <begin position="1"/>
        <end position="169"/>
    </location>
</feature>
<feature type="active site" evidence="1">
    <location>
        <position position="10"/>
    </location>
</feature>